<sequence>MAMKKLLIASLLFSSATVYGAEGFVVKDIHFEGLQRVAVGAALLSMPVRTGDTVNDEDISNTIRALFATGNFEDVRVLRDGDTLLVQVKERPTIASITFSGNKSVKDDMLKQNLEASGVRVGESLDRTTIADIEKGLEDFYYSVGKYSASVKAVVTPLPRNRVDLKLVFQEGVSAEIQQINIVGNHAFTTDELISHFQLRDEVPWWNVVGDRKYQKQKLAGDLETLRSYYLDRGYARFNIDSTQVSLTPDKKGIYVTVNITEGDQYKLSGVEVSGNLAGHSAEIEQLTKIEPGELYNGTKVTKMEDDIKKLLGRYGYAYPRVQSMPEINDADKTVKLRVNVDAGNRFYVRKIRFEGNDTSKDAVLRREMRQMEGAWLGSDLVDQGKERLNRLGFFETVDTDTQRVPGSPDQVDVVYKVKERNTGSFNFGIGYGTESGVSFQAGVQQDNWLGTGYAVGINGTKNDYQTYAELSVTNPYFTVDGVSLGGRLFYNDFQADDADLSDYTNKSYGTDVTLGFPINEYNSLRAGLGYVHNSLSNMQPQVAMWRYLYSMGEHPSTSDQDNSFKTDDFTFNYGWTYNKLDRGYFPTDGSRVNLTGKVTIPGSDNEYYKVTLDTATYVPIDDDHKWVVLGRTRWGYGDGLGGKEMPFYENFYAGGSSTVRGFQSNTIGPKAVYFPHQASNYDPDYDYECATQDGAKDLCKSDDAVGGNAMAVASLEFITPTPFISDKYANSVRTSFFWDMGTVWDTNWDSSQYSGYPDYSDPSNIRMSAGIALQWMSPLGPLVFSYAQPFKKYDGDKAEQFQFNIGKTW</sequence>
<keyword id="KW-0998">Cell outer membrane</keyword>
<keyword id="KW-0472">Membrane</keyword>
<keyword id="KW-0677">Repeat</keyword>
<keyword id="KW-0732">Signal</keyword>
<keyword id="KW-0812">Transmembrane</keyword>
<keyword id="KW-1134">Transmembrane beta strand</keyword>
<feature type="signal peptide" evidence="1">
    <location>
        <begin position="1"/>
        <end position="20"/>
    </location>
</feature>
<feature type="chain" id="PRO_1000145772" description="Outer membrane protein assembly factor BamA">
    <location>
        <begin position="21"/>
        <end position="810"/>
    </location>
</feature>
<feature type="domain" description="POTRA 1" evidence="2">
    <location>
        <begin position="24"/>
        <end position="91"/>
    </location>
</feature>
<feature type="domain" description="POTRA 2" evidence="2">
    <location>
        <begin position="92"/>
        <end position="172"/>
    </location>
</feature>
<feature type="domain" description="POTRA 3" evidence="2">
    <location>
        <begin position="175"/>
        <end position="263"/>
    </location>
</feature>
<feature type="domain" description="POTRA 4" evidence="2">
    <location>
        <begin position="266"/>
        <end position="344"/>
    </location>
</feature>
<feature type="domain" description="POTRA 5" evidence="2">
    <location>
        <begin position="347"/>
        <end position="421"/>
    </location>
</feature>
<gene>
    <name evidence="1" type="primary">bamA</name>
    <name type="synonym">yaeT</name>
    <name type="ordered locus">ECIAI39_0180</name>
</gene>
<comment type="function">
    <text evidence="1">Part of the outer membrane protein assembly complex, which is involved in assembly and insertion of beta-barrel proteins into the outer membrane. Constitutes, with BamD, the core component of the assembly machinery.</text>
</comment>
<comment type="subunit">
    <text evidence="1">Part of the Bam complex, which is composed of the outer membrane protein BamA, and four lipoproteins BamB, BamC, BamD and BamE.</text>
</comment>
<comment type="subcellular location">
    <subcellularLocation>
        <location evidence="1">Cell outer membrane</location>
    </subcellularLocation>
</comment>
<comment type="similarity">
    <text evidence="1">Belongs to the BamA family.</text>
</comment>
<organism>
    <name type="scientific">Escherichia coli O7:K1 (strain IAI39 / ExPEC)</name>
    <dbReference type="NCBI Taxonomy" id="585057"/>
    <lineage>
        <taxon>Bacteria</taxon>
        <taxon>Pseudomonadati</taxon>
        <taxon>Pseudomonadota</taxon>
        <taxon>Gammaproteobacteria</taxon>
        <taxon>Enterobacterales</taxon>
        <taxon>Enterobacteriaceae</taxon>
        <taxon>Escherichia</taxon>
    </lineage>
</organism>
<protein>
    <recommendedName>
        <fullName evidence="1">Outer membrane protein assembly factor BamA</fullName>
    </recommendedName>
</protein>
<accession>B7NID9</accession>
<name>BAMA_ECO7I</name>
<dbReference type="EMBL" id="CU928164">
    <property type="protein sequence ID" value="CAR16320.1"/>
    <property type="molecule type" value="Genomic_DNA"/>
</dbReference>
<dbReference type="RefSeq" id="WP_001240896.1">
    <property type="nucleotide sequence ID" value="NC_011750.1"/>
</dbReference>
<dbReference type="RefSeq" id="YP_002406226.1">
    <property type="nucleotide sequence ID" value="NC_011750.1"/>
</dbReference>
<dbReference type="SMR" id="B7NID9"/>
<dbReference type="STRING" id="585057.ECIAI39_0180"/>
<dbReference type="GeneID" id="93777248"/>
<dbReference type="KEGG" id="ect:ECIAI39_0180"/>
<dbReference type="PATRIC" id="fig|585057.6.peg.193"/>
<dbReference type="HOGENOM" id="CLU_007664_1_0_6"/>
<dbReference type="Proteomes" id="UP000000749">
    <property type="component" value="Chromosome"/>
</dbReference>
<dbReference type="GO" id="GO:1990063">
    <property type="term" value="C:Bam protein complex"/>
    <property type="evidence" value="ECO:0007669"/>
    <property type="project" value="TreeGrafter"/>
</dbReference>
<dbReference type="GO" id="GO:0043165">
    <property type="term" value="P:Gram-negative-bacterium-type cell outer membrane assembly"/>
    <property type="evidence" value="ECO:0007669"/>
    <property type="project" value="UniProtKB-UniRule"/>
</dbReference>
<dbReference type="GO" id="GO:0051205">
    <property type="term" value="P:protein insertion into membrane"/>
    <property type="evidence" value="ECO:0007669"/>
    <property type="project" value="UniProtKB-UniRule"/>
</dbReference>
<dbReference type="FunFam" id="2.40.160.50:FF:000001">
    <property type="entry name" value="Outer membrane protein assembly factor BamA"/>
    <property type="match status" value="1"/>
</dbReference>
<dbReference type="FunFam" id="3.10.20.310:FF:000001">
    <property type="entry name" value="Outer membrane protein assembly factor BamA"/>
    <property type="match status" value="1"/>
</dbReference>
<dbReference type="FunFam" id="3.10.20.310:FF:000002">
    <property type="entry name" value="Outer membrane protein assembly factor BamA"/>
    <property type="match status" value="1"/>
</dbReference>
<dbReference type="FunFam" id="3.10.20.310:FF:000003">
    <property type="entry name" value="Outer membrane protein assembly factor BamA"/>
    <property type="match status" value="1"/>
</dbReference>
<dbReference type="FunFam" id="3.10.20.310:FF:000004">
    <property type="entry name" value="Outer membrane protein assembly factor BamA"/>
    <property type="match status" value="1"/>
</dbReference>
<dbReference type="FunFam" id="3.10.20.310:FF:000005">
    <property type="entry name" value="Outer membrane protein assembly factor BamA"/>
    <property type="match status" value="1"/>
</dbReference>
<dbReference type="Gene3D" id="3.10.20.310">
    <property type="entry name" value="membrane protein fhac"/>
    <property type="match status" value="5"/>
</dbReference>
<dbReference type="Gene3D" id="2.40.160.50">
    <property type="entry name" value="membrane protein fhac: a member of the omp85/tpsb transporter family"/>
    <property type="match status" value="1"/>
</dbReference>
<dbReference type="HAMAP" id="MF_01430">
    <property type="entry name" value="OM_assembly_BamA"/>
    <property type="match status" value="1"/>
</dbReference>
<dbReference type="InterPro" id="IPR000184">
    <property type="entry name" value="Bac_surfAg_D15"/>
</dbReference>
<dbReference type="InterPro" id="IPR010827">
    <property type="entry name" value="BamA/TamA_POTRA"/>
</dbReference>
<dbReference type="InterPro" id="IPR039910">
    <property type="entry name" value="D15-like"/>
</dbReference>
<dbReference type="InterPro" id="IPR023707">
    <property type="entry name" value="OM_assembly_BamA"/>
</dbReference>
<dbReference type="InterPro" id="IPR034746">
    <property type="entry name" value="POTRA"/>
</dbReference>
<dbReference type="NCBIfam" id="TIGR03303">
    <property type="entry name" value="OM_YaeT"/>
    <property type="match status" value="1"/>
</dbReference>
<dbReference type="NCBIfam" id="NF008287">
    <property type="entry name" value="PRK11067.1"/>
    <property type="match status" value="1"/>
</dbReference>
<dbReference type="PANTHER" id="PTHR12815:SF23">
    <property type="entry name" value="OUTER MEMBRANE PROTEIN ASSEMBLY FACTOR BAMA"/>
    <property type="match status" value="1"/>
</dbReference>
<dbReference type="PANTHER" id="PTHR12815">
    <property type="entry name" value="SORTING AND ASSEMBLY MACHINERY SAMM50 PROTEIN FAMILY MEMBER"/>
    <property type="match status" value="1"/>
</dbReference>
<dbReference type="Pfam" id="PF01103">
    <property type="entry name" value="Omp85"/>
    <property type="match status" value="1"/>
</dbReference>
<dbReference type="Pfam" id="PF07244">
    <property type="entry name" value="POTRA"/>
    <property type="match status" value="4"/>
</dbReference>
<dbReference type="PIRSF" id="PIRSF006076">
    <property type="entry name" value="OM_assembly_OMP85"/>
    <property type="match status" value="1"/>
</dbReference>
<dbReference type="PROSITE" id="PS51779">
    <property type="entry name" value="POTRA"/>
    <property type="match status" value="5"/>
</dbReference>
<evidence type="ECO:0000255" key="1">
    <source>
        <dbReference type="HAMAP-Rule" id="MF_01430"/>
    </source>
</evidence>
<evidence type="ECO:0000255" key="2">
    <source>
        <dbReference type="PROSITE-ProRule" id="PRU01115"/>
    </source>
</evidence>
<reference key="1">
    <citation type="journal article" date="2009" name="PLoS Genet.">
        <title>Organised genome dynamics in the Escherichia coli species results in highly diverse adaptive paths.</title>
        <authorList>
            <person name="Touchon M."/>
            <person name="Hoede C."/>
            <person name="Tenaillon O."/>
            <person name="Barbe V."/>
            <person name="Baeriswyl S."/>
            <person name="Bidet P."/>
            <person name="Bingen E."/>
            <person name="Bonacorsi S."/>
            <person name="Bouchier C."/>
            <person name="Bouvet O."/>
            <person name="Calteau A."/>
            <person name="Chiapello H."/>
            <person name="Clermont O."/>
            <person name="Cruveiller S."/>
            <person name="Danchin A."/>
            <person name="Diard M."/>
            <person name="Dossat C."/>
            <person name="Karoui M.E."/>
            <person name="Frapy E."/>
            <person name="Garry L."/>
            <person name="Ghigo J.M."/>
            <person name="Gilles A.M."/>
            <person name="Johnson J."/>
            <person name="Le Bouguenec C."/>
            <person name="Lescat M."/>
            <person name="Mangenot S."/>
            <person name="Martinez-Jehanne V."/>
            <person name="Matic I."/>
            <person name="Nassif X."/>
            <person name="Oztas S."/>
            <person name="Petit M.A."/>
            <person name="Pichon C."/>
            <person name="Rouy Z."/>
            <person name="Ruf C.S."/>
            <person name="Schneider D."/>
            <person name="Tourret J."/>
            <person name="Vacherie B."/>
            <person name="Vallenet D."/>
            <person name="Medigue C."/>
            <person name="Rocha E.P.C."/>
            <person name="Denamur E."/>
        </authorList>
    </citation>
    <scope>NUCLEOTIDE SEQUENCE [LARGE SCALE GENOMIC DNA]</scope>
    <source>
        <strain>IAI39 / ExPEC</strain>
    </source>
</reference>
<proteinExistence type="inferred from homology"/>